<protein>
    <recommendedName>
        <fullName evidence="1">Phosphoribosyl-AMP cyclohydrolase</fullName>
        <shortName evidence="1">PRA-CH</shortName>
        <ecNumber evidence="1">3.5.4.19</ecNumber>
    </recommendedName>
</protein>
<feature type="chain" id="PRO_1000213302" description="Phosphoribosyl-AMP cyclohydrolase">
    <location>
        <begin position="1"/>
        <end position="105"/>
    </location>
</feature>
<feature type="binding site" evidence="1">
    <location>
        <position position="72"/>
    </location>
    <ligand>
        <name>Mg(2+)</name>
        <dbReference type="ChEBI" id="CHEBI:18420"/>
    </ligand>
</feature>
<feature type="binding site" evidence="1">
    <location>
        <position position="73"/>
    </location>
    <ligand>
        <name>Zn(2+)</name>
        <dbReference type="ChEBI" id="CHEBI:29105"/>
        <note>ligand shared between dimeric partners</note>
    </ligand>
</feature>
<feature type="binding site" evidence="1">
    <location>
        <position position="74"/>
    </location>
    <ligand>
        <name>Mg(2+)</name>
        <dbReference type="ChEBI" id="CHEBI:18420"/>
    </ligand>
</feature>
<feature type="binding site" evidence="1">
    <location>
        <position position="76"/>
    </location>
    <ligand>
        <name>Mg(2+)</name>
        <dbReference type="ChEBI" id="CHEBI:18420"/>
    </ligand>
</feature>
<feature type="binding site" evidence="1">
    <location>
        <position position="89"/>
    </location>
    <ligand>
        <name>Zn(2+)</name>
        <dbReference type="ChEBI" id="CHEBI:29105"/>
        <note>ligand shared between dimeric partners</note>
    </ligand>
</feature>
<feature type="binding site" evidence="1">
    <location>
        <position position="96"/>
    </location>
    <ligand>
        <name>Zn(2+)</name>
        <dbReference type="ChEBI" id="CHEBI:29105"/>
        <note>ligand shared between dimeric partners</note>
    </ligand>
</feature>
<gene>
    <name evidence="1" type="primary">hisI</name>
    <name type="ordered locus">Lm4b_00588</name>
</gene>
<accession>C1L0J1</accession>
<comment type="function">
    <text evidence="1">Catalyzes the hydrolysis of the adenine ring of phosphoribosyl-AMP.</text>
</comment>
<comment type="catalytic activity">
    <reaction evidence="1">
        <text>1-(5-phospho-beta-D-ribosyl)-5'-AMP + H2O = 1-(5-phospho-beta-D-ribosyl)-5-[(5-phospho-beta-D-ribosylamino)methylideneamino]imidazole-4-carboxamide</text>
        <dbReference type="Rhea" id="RHEA:20049"/>
        <dbReference type="ChEBI" id="CHEBI:15377"/>
        <dbReference type="ChEBI" id="CHEBI:58435"/>
        <dbReference type="ChEBI" id="CHEBI:59457"/>
        <dbReference type="EC" id="3.5.4.19"/>
    </reaction>
</comment>
<comment type="cofactor">
    <cofactor evidence="1">
        <name>Mg(2+)</name>
        <dbReference type="ChEBI" id="CHEBI:18420"/>
    </cofactor>
    <text evidence="1">Binds 1 Mg(2+) ion per subunit.</text>
</comment>
<comment type="cofactor">
    <cofactor evidence="1">
        <name>Zn(2+)</name>
        <dbReference type="ChEBI" id="CHEBI:29105"/>
    </cofactor>
    <text evidence="1">Binds 1 zinc ion per subunit.</text>
</comment>
<comment type="pathway">
    <text evidence="1">Amino-acid biosynthesis; L-histidine biosynthesis; L-histidine from 5-phospho-alpha-D-ribose 1-diphosphate: step 3/9.</text>
</comment>
<comment type="subunit">
    <text evidence="1">Homodimer.</text>
</comment>
<comment type="subcellular location">
    <subcellularLocation>
        <location evidence="1">Cytoplasm</location>
    </subcellularLocation>
</comment>
<comment type="similarity">
    <text evidence="1">Belongs to the PRA-CH family.</text>
</comment>
<keyword id="KW-0028">Amino-acid biosynthesis</keyword>
<keyword id="KW-0963">Cytoplasm</keyword>
<keyword id="KW-0368">Histidine biosynthesis</keyword>
<keyword id="KW-0378">Hydrolase</keyword>
<keyword id="KW-0460">Magnesium</keyword>
<keyword id="KW-0479">Metal-binding</keyword>
<keyword id="KW-0862">Zinc</keyword>
<organism>
    <name type="scientific">Listeria monocytogenes serotype 4b (strain CLIP80459)</name>
    <dbReference type="NCBI Taxonomy" id="568819"/>
    <lineage>
        <taxon>Bacteria</taxon>
        <taxon>Bacillati</taxon>
        <taxon>Bacillota</taxon>
        <taxon>Bacilli</taxon>
        <taxon>Bacillales</taxon>
        <taxon>Listeriaceae</taxon>
        <taxon>Listeria</taxon>
    </lineage>
</organism>
<proteinExistence type="inferred from homology"/>
<evidence type="ECO:0000255" key="1">
    <source>
        <dbReference type="HAMAP-Rule" id="MF_01021"/>
    </source>
</evidence>
<reference key="1">
    <citation type="journal article" date="2012" name="BMC Genomics">
        <title>Comparative genomics and transcriptomics of lineages I, II, and III strains of Listeria monocytogenes.</title>
        <authorList>
            <person name="Hain T."/>
            <person name="Ghai R."/>
            <person name="Billion A."/>
            <person name="Kuenne C.T."/>
            <person name="Steinweg C."/>
            <person name="Izar B."/>
            <person name="Mohamed W."/>
            <person name="Mraheil M."/>
            <person name="Domann E."/>
            <person name="Schaffrath S."/>
            <person name="Karst U."/>
            <person name="Goesmann A."/>
            <person name="Oehm S."/>
            <person name="Puhler A."/>
            <person name="Merkl R."/>
            <person name="Vorwerk S."/>
            <person name="Glaser P."/>
            <person name="Garrido P."/>
            <person name="Rusniok C."/>
            <person name="Buchrieser C."/>
            <person name="Goebel W."/>
            <person name="Chakraborty T."/>
        </authorList>
    </citation>
    <scope>NUCLEOTIDE SEQUENCE [LARGE SCALE GENOMIC DNA]</scope>
    <source>
        <strain>CLIP80459</strain>
    </source>
</reference>
<dbReference type="EC" id="3.5.4.19" evidence="1"/>
<dbReference type="EMBL" id="FM242711">
    <property type="protein sequence ID" value="CAS04356.1"/>
    <property type="molecule type" value="Genomic_DNA"/>
</dbReference>
<dbReference type="RefSeq" id="WP_003725464.1">
    <property type="nucleotide sequence ID" value="NC_012488.1"/>
</dbReference>
<dbReference type="SMR" id="C1L0J1"/>
<dbReference type="KEGG" id="lmc:Lm4b_00588"/>
<dbReference type="HOGENOM" id="CLU_048577_5_3_9"/>
<dbReference type="UniPathway" id="UPA00031">
    <property type="reaction ID" value="UER00008"/>
</dbReference>
<dbReference type="GO" id="GO:0005737">
    <property type="term" value="C:cytoplasm"/>
    <property type="evidence" value="ECO:0007669"/>
    <property type="project" value="UniProtKB-SubCell"/>
</dbReference>
<dbReference type="GO" id="GO:0000287">
    <property type="term" value="F:magnesium ion binding"/>
    <property type="evidence" value="ECO:0007669"/>
    <property type="project" value="UniProtKB-UniRule"/>
</dbReference>
<dbReference type="GO" id="GO:0004635">
    <property type="term" value="F:phosphoribosyl-AMP cyclohydrolase activity"/>
    <property type="evidence" value="ECO:0007669"/>
    <property type="project" value="UniProtKB-UniRule"/>
</dbReference>
<dbReference type="GO" id="GO:0008270">
    <property type="term" value="F:zinc ion binding"/>
    <property type="evidence" value="ECO:0007669"/>
    <property type="project" value="UniProtKB-UniRule"/>
</dbReference>
<dbReference type="GO" id="GO:0000105">
    <property type="term" value="P:L-histidine biosynthetic process"/>
    <property type="evidence" value="ECO:0007669"/>
    <property type="project" value="UniProtKB-UniRule"/>
</dbReference>
<dbReference type="FunFam" id="3.10.20.810:FF:000001">
    <property type="entry name" value="Histidine biosynthesis bifunctional protein HisIE"/>
    <property type="match status" value="1"/>
</dbReference>
<dbReference type="Gene3D" id="3.10.20.810">
    <property type="entry name" value="Phosphoribosyl-AMP cyclohydrolase"/>
    <property type="match status" value="1"/>
</dbReference>
<dbReference type="HAMAP" id="MF_01021">
    <property type="entry name" value="HisI"/>
    <property type="match status" value="1"/>
</dbReference>
<dbReference type="InterPro" id="IPR026660">
    <property type="entry name" value="PRA-CH"/>
</dbReference>
<dbReference type="InterPro" id="IPR002496">
    <property type="entry name" value="PRib_AMP_CycHydrolase_dom"/>
</dbReference>
<dbReference type="InterPro" id="IPR038019">
    <property type="entry name" value="PRib_AMP_CycHydrolase_sf"/>
</dbReference>
<dbReference type="NCBIfam" id="NF000768">
    <property type="entry name" value="PRK00051.1"/>
    <property type="match status" value="1"/>
</dbReference>
<dbReference type="PANTHER" id="PTHR42945">
    <property type="entry name" value="HISTIDINE BIOSYNTHESIS BIFUNCTIONAL PROTEIN"/>
    <property type="match status" value="1"/>
</dbReference>
<dbReference type="PANTHER" id="PTHR42945:SF1">
    <property type="entry name" value="HISTIDINE BIOSYNTHESIS BIFUNCTIONAL PROTEIN HIS7"/>
    <property type="match status" value="1"/>
</dbReference>
<dbReference type="Pfam" id="PF01502">
    <property type="entry name" value="PRA-CH"/>
    <property type="match status" value="1"/>
</dbReference>
<dbReference type="SUPFAM" id="SSF141734">
    <property type="entry name" value="HisI-like"/>
    <property type="match status" value="1"/>
</dbReference>
<sequence>MTSVDFSKGLVPTIILDDQNGDVLMLAYMNEESYQKTLETGYTWFFSRSRNELWNKGATSGHTQKVKQIWTDCDNDTLLIRVTQIGPACHTGKKSCFFNLIKEDF</sequence>
<name>HIS3_LISMC</name>